<protein>
    <recommendedName>
        <fullName evidence="1">UvrABC system protein C</fullName>
        <shortName evidence="1">Protein UvrC</shortName>
    </recommendedName>
    <alternativeName>
        <fullName evidence="1">Excinuclease ABC subunit C</fullName>
    </alternativeName>
</protein>
<organism>
    <name type="scientific">Xanthomonas oryzae pv. oryzae (strain PXO99A)</name>
    <dbReference type="NCBI Taxonomy" id="360094"/>
    <lineage>
        <taxon>Bacteria</taxon>
        <taxon>Pseudomonadati</taxon>
        <taxon>Pseudomonadota</taxon>
        <taxon>Gammaproteobacteria</taxon>
        <taxon>Lysobacterales</taxon>
        <taxon>Lysobacteraceae</taxon>
        <taxon>Xanthomonas</taxon>
    </lineage>
</organism>
<dbReference type="EMBL" id="CP000967">
    <property type="protein sequence ID" value="ACD58910.1"/>
    <property type="molecule type" value="Genomic_DNA"/>
</dbReference>
<dbReference type="RefSeq" id="WP_011258969.1">
    <property type="nucleotide sequence ID" value="NC_010717.2"/>
</dbReference>
<dbReference type="SMR" id="B2SKI8"/>
<dbReference type="KEGG" id="xop:PXO_00582"/>
<dbReference type="eggNOG" id="COG0322">
    <property type="taxonomic scope" value="Bacteria"/>
</dbReference>
<dbReference type="HOGENOM" id="CLU_014841_3_0_6"/>
<dbReference type="Proteomes" id="UP000001740">
    <property type="component" value="Chromosome"/>
</dbReference>
<dbReference type="GO" id="GO:0005737">
    <property type="term" value="C:cytoplasm"/>
    <property type="evidence" value="ECO:0007669"/>
    <property type="project" value="UniProtKB-SubCell"/>
</dbReference>
<dbReference type="GO" id="GO:0009380">
    <property type="term" value="C:excinuclease repair complex"/>
    <property type="evidence" value="ECO:0007669"/>
    <property type="project" value="InterPro"/>
</dbReference>
<dbReference type="GO" id="GO:0003677">
    <property type="term" value="F:DNA binding"/>
    <property type="evidence" value="ECO:0007669"/>
    <property type="project" value="UniProtKB-UniRule"/>
</dbReference>
<dbReference type="GO" id="GO:0009381">
    <property type="term" value="F:excinuclease ABC activity"/>
    <property type="evidence" value="ECO:0007669"/>
    <property type="project" value="UniProtKB-UniRule"/>
</dbReference>
<dbReference type="GO" id="GO:0006289">
    <property type="term" value="P:nucleotide-excision repair"/>
    <property type="evidence" value="ECO:0007669"/>
    <property type="project" value="UniProtKB-UniRule"/>
</dbReference>
<dbReference type="GO" id="GO:0009432">
    <property type="term" value="P:SOS response"/>
    <property type="evidence" value="ECO:0007669"/>
    <property type="project" value="UniProtKB-UniRule"/>
</dbReference>
<dbReference type="CDD" id="cd10434">
    <property type="entry name" value="GIY-YIG_UvrC_Cho"/>
    <property type="match status" value="1"/>
</dbReference>
<dbReference type="FunFam" id="1.10.150.20:FF:000005">
    <property type="entry name" value="UvrABC system protein C"/>
    <property type="match status" value="1"/>
</dbReference>
<dbReference type="FunFam" id="3.30.420.340:FF:000001">
    <property type="entry name" value="UvrABC system protein C"/>
    <property type="match status" value="1"/>
</dbReference>
<dbReference type="FunFam" id="3.40.1440.10:FF:000001">
    <property type="entry name" value="UvrABC system protein C"/>
    <property type="match status" value="1"/>
</dbReference>
<dbReference type="Gene3D" id="1.10.150.20">
    <property type="entry name" value="5' to 3' exonuclease, C-terminal subdomain"/>
    <property type="match status" value="1"/>
</dbReference>
<dbReference type="Gene3D" id="3.40.1440.10">
    <property type="entry name" value="GIY-YIG endonuclease"/>
    <property type="match status" value="1"/>
</dbReference>
<dbReference type="Gene3D" id="4.10.860.10">
    <property type="entry name" value="UVR domain"/>
    <property type="match status" value="1"/>
</dbReference>
<dbReference type="Gene3D" id="3.30.420.340">
    <property type="entry name" value="UvrC, RNAse H endonuclease domain"/>
    <property type="match status" value="1"/>
</dbReference>
<dbReference type="HAMAP" id="MF_00203">
    <property type="entry name" value="UvrC"/>
    <property type="match status" value="1"/>
</dbReference>
<dbReference type="InterPro" id="IPR000305">
    <property type="entry name" value="GIY-YIG_endonuc"/>
</dbReference>
<dbReference type="InterPro" id="IPR035901">
    <property type="entry name" value="GIY-YIG_endonuc_sf"/>
</dbReference>
<dbReference type="InterPro" id="IPR047296">
    <property type="entry name" value="GIY-YIG_UvrC_Cho"/>
</dbReference>
<dbReference type="InterPro" id="IPR003583">
    <property type="entry name" value="Hlx-hairpin-Hlx_DNA-bd_motif"/>
</dbReference>
<dbReference type="InterPro" id="IPR010994">
    <property type="entry name" value="RuvA_2-like"/>
</dbReference>
<dbReference type="InterPro" id="IPR001943">
    <property type="entry name" value="UVR_dom"/>
</dbReference>
<dbReference type="InterPro" id="IPR036876">
    <property type="entry name" value="UVR_dom_sf"/>
</dbReference>
<dbReference type="InterPro" id="IPR050066">
    <property type="entry name" value="UvrABC_protein_C"/>
</dbReference>
<dbReference type="InterPro" id="IPR004791">
    <property type="entry name" value="UvrC"/>
</dbReference>
<dbReference type="InterPro" id="IPR001162">
    <property type="entry name" value="UvrC_RNase_H_dom"/>
</dbReference>
<dbReference type="InterPro" id="IPR038476">
    <property type="entry name" value="UvrC_RNase_H_dom_sf"/>
</dbReference>
<dbReference type="NCBIfam" id="TIGR00194">
    <property type="entry name" value="uvrC"/>
    <property type="match status" value="1"/>
</dbReference>
<dbReference type="PANTHER" id="PTHR30562:SF1">
    <property type="entry name" value="UVRABC SYSTEM PROTEIN C"/>
    <property type="match status" value="1"/>
</dbReference>
<dbReference type="PANTHER" id="PTHR30562">
    <property type="entry name" value="UVRC/OXIDOREDUCTASE"/>
    <property type="match status" value="1"/>
</dbReference>
<dbReference type="Pfam" id="PF01541">
    <property type="entry name" value="GIY-YIG"/>
    <property type="match status" value="1"/>
</dbReference>
<dbReference type="Pfam" id="PF14520">
    <property type="entry name" value="HHH_5"/>
    <property type="match status" value="1"/>
</dbReference>
<dbReference type="Pfam" id="PF02151">
    <property type="entry name" value="UVR"/>
    <property type="match status" value="1"/>
</dbReference>
<dbReference type="Pfam" id="PF22920">
    <property type="entry name" value="UvrC_RNaseH"/>
    <property type="match status" value="1"/>
</dbReference>
<dbReference type="Pfam" id="PF08459">
    <property type="entry name" value="UvrC_RNaseH_dom"/>
    <property type="match status" value="1"/>
</dbReference>
<dbReference type="SMART" id="SM00465">
    <property type="entry name" value="GIYc"/>
    <property type="match status" value="1"/>
</dbReference>
<dbReference type="SMART" id="SM00278">
    <property type="entry name" value="HhH1"/>
    <property type="match status" value="2"/>
</dbReference>
<dbReference type="SUPFAM" id="SSF46600">
    <property type="entry name" value="C-terminal UvrC-binding domain of UvrB"/>
    <property type="match status" value="1"/>
</dbReference>
<dbReference type="SUPFAM" id="SSF82771">
    <property type="entry name" value="GIY-YIG endonuclease"/>
    <property type="match status" value="1"/>
</dbReference>
<dbReference type="SUPFAM" id="SSF47781">
    <property type="entry name" value="RuvA domain 2-like"/>
    <property type="match status" value="1"/>
</dbReference>
<dbReference type="PROSITE" id="PS50164">
    <property type="entry name" value="GIY_YIG"/>
    <property type="match status" value="1"/>
</dbReference>
<dbReference type="PROSITE" id="PS50151">
    <property type="entry name" value="UVR"/>
    <property type="match status" value="1"/>
</dbReference>
<dbReference type="PROSITE" id="PS50165">
    <property type="entry name" value="UVRC"/>
    <property type="match status" value="1"/>
</dbReference>
<reference key="1">
    <citation type="journal article" date="2008" name="BMC Genomics">
        <title>Genome sequence and rapid evolution of the rice pathogen Xanthomonas oryzae pv. oryzae PXO99A.</title>
        <authorList>
            <person name="Salzberg S.L."/>
            <person name="Sommer D.D."/>
            <person name="Schatz M.C."/>
            <person name="Phillippy A.M."/>
            <person name="Rabinowicz P.D."/>
            <person name="Tsuge S."/>
            <person name="Furutani A."/>
            <person name="Ochiai H."/>
            <person name="Delcher A.L."/>
            <person name="Kelley D."/>
            <person name="Madupu R."/>
            <person name="Puiu D."/>
            <person name="Radune D."/>
            <person name="Shumway M."/>
            <person name="Trapnell C."/>
            <person name="Aparna G."/>
            <person name="Jha G."/>
            <person name="Pandey A."/>
            <person name="Patil P.B."/>
            <person name="Ishihara H."/>
            <person name="Meyer D.F."/>
            <person name="Szurek B."/>
            <person name="Verdier V."/>
            <person name="Koebnik R."/>
            <person name="Dow J.M."/>
            <person name="Ryan R.P."/>
            <person name="Hirata H."/>
            <person name="Tsuyumu S."/>
            <person name="Won Lee S."/>
            <person name="Seo Y.-S."/>
            <person name="Sriariyanum M."/>
            <person name="Ronald P.C."/>
            <person name="Sonti R.V."/>
            <person name="Van Sluys M.-A."/>
            <person name="Leach J.E."/>
            <person name="White F.F."/>
            <person name="Bogdanove A.J."/>
        </authorList>
    </citation>
    <scope>NUCLEOTIDE SEQUENCE [LARGE SCALE GENOMIC DNA]</scope>
    <source>
        <strain>PXO99A</strain>
    </source>
</reference>
<proteinExistence type="inferred from homology"/>
<gene>
    <name evidence="1" type="primary">uvrC</name>
    <name type="ordered locus">PXO_00582</name>
</gene>
<sequence>MSAGPQSDFDGKAFAAQLSTAPGVYRMYAGDDTLLYVGKAGALRKRVGSYFNGTPKNARLTSMLSQVARMDVTVTRSEAEALLLENQLIKSLSPRYNVSLRDDKSYPYVLLTREHWPRIALHRGPRAVQGRYFGPYTGVTGVRETLSLMHKLFKLRSCEDSVFRNRSRPCLQYQIGRCSGPCVDLVAAPDYAESVRRATMFLEGKSDQLGEEIMQSMQQASEALEFERAARLRDLLSSLRSMQNRQYVDGRAADLDVLACATQSSQACVLLLSFRDGRNLGTRSFFPKTNGEDSADEILGAFVSQYYAEHSPPREILLDREIPETELIEAALSTAAEHKVALKWNVRGERAGYLLLATRNAQLTLVTELTSQSAQHARSEALREMLGLAEPVKRVECFDISHTMGEATVASCVVFDASGPVRGQYRRFNISGITPGDDYAAMRQAIERRFRRAVEENGVLPDVLLIDGGAGQLAQAQAALADLGVENVWLVGVAKGEERRAGHEALIMADGRELRPGAASPALQFIQQVRDEAHRFAITGHRGRRQKARMTSKLEDIPGIGPRRRASLLKHFGGLVGLKAAGEAEIARVEGVNAALAARIYANLHGLALPDAAGESSP</sequence>
<keyword id="KW-0963">Cytoplasm</keyword>
<keyword id="KW-0227">DNA damage</keyword>
<keyword id="KW-0228">DNA excision</keyword>
<keyword id="KW-0234">DNA repair</keyword>
<keyword id="KW-0267">Excision nuclease</keyword>
<keyword id="KW-0742">SOS response</keyword>
<accession>B2SKI8</accession>
<name>UVRC_XANOP</name>
<feature type="chain" id="PRO_1000099536" description="UvrABC system protein C">
    <location>
        <begin position="1"/>
        <end position="618"/>
    </location>
</feature>
<feature type="domain" description="GIY-YIG" evidence="1">
    <location>
        <begin position="20"/>
        <end position="98"/>
    </location>
</feature>
<feature type="domain" description="UVR" evidence="1">
    <location>
        <begin position="207"/>
        <end position="242"/>
    </location>
</feature>
<evidence type="ECO:0000255" key="1">
    <source>
        <dbReference type="HAMAP-Rule" id="MF_00203"/>
    </source>
</evidence>
<comment type="function">
    <text evidence="1">The UvrABC repair system catalyzes the recognition and processing of DNA lesions. UvrC both incises the 5' and 3' sides of the lesion. The N-terminal half is responsible for the 3' incision and the C-terminal half is responsible for the 5' incision.</text>
</comment>
<comment type="subunit">
    <text evidence="1">Interacts with UvrB in an incision complex.</text>
</comment>
<comment type="subcellular location">
    <subcellularLocation>
        <location evidence="1">Cytoplasm</location>
    </subcellularLocation>
</comment>
<comment type="similarity">
    <text evidence="1">Belongs to the UvrC family.</text>
</comment>